<gene>
    <name evidence="1" type="primary">rplX</name>
    <name type="ordered locus">NMC0143</name>
</gene>
<dbReference type="EMBL" id="AM421808">
    <property type="protein sequence ID" value="CAM09462.1"/>
    <property type="molecule type" value="Genomic_DNA"/>
</dbReference>
<dbReference type="RefSeq" id="WP_002215435.1">
    <property type="nucleotide sequence ID" value="NC_008767.1"/>
</dbReference>
<dbReference type="SMR" id="A1KRI4"/>
<dbReference type="GeneID" id="93387228"/>
<dbReference type="KEGG" id="nmc:NMC0143"/>
<dbReference type="HOGENOM" id="CLU_093315_2_2_4"/>
<dbReference type="Proteomes" id="UP000002286">
    <property type="component" value="Chromosome"/>
</dbReference>
<dbReference type="GO" id="GO:1990904">
    <property type="term" value="C:ribonucleoprotein complex"/>
    <property type="evidence" value="ECO:0007669"/>
    <property type="project" value="UniProtKB-KW"/>
</dbReference>
<dbReference type="GO" id="GO:0005840">
    <property type="term" value="C:ribosome"/>
    <property type="evidence" value="ECO:0007669"/>
    <property type="project" value="UniProtKB-KW"/>
</dbReference>
<dbReference type="GO" id="GO:0019843">
    <property type="term" value="F:rRNA binding"/>
    <property type="evidence" value="ECO:0007669"/>
    <property type="project" value="UniProtKB-UniRule"/>
</dbReference>
<dbReference type="GO" id="GO:0003735">
    <property type="term" value="F:structural constituent of ribosome"/>
    <property type="evidence" value="ECO:0007669"/>
    <property type="project" value="InterPro"/>
</dbReference>
<dbReference type="GO" id="GO:0006412">
    <property type="term" value="P:translation"/>
    <property type="evidence" value="ECO:0007669"/>
    <property type="project" value="UniProtKB-UniRule"/>
</dbReference>
<dbReference type="CDD" id="cd06089">
    <property type="entry name" value="KOW_RPL26"/>
    <property type="match status" value="1"/>
</dbReference>
<dbReference type="FunFam" id="2.30.30.30:FF:000004">
    <property type="entry name" value="50S ribosomal protein L24"/>
    <property type="match status" value="1"/>
</dbReference>
<dbReference type="Gene3D" id="2.30.30.30">
    <property type="match status" value="1"/>
</dbReference>
<dbReference type="HAMAP" id="MF_01326_B">
    <property type="entry name" value="Ribosomal_uL24_B"/>
    <property type="match status" value="1"/>
</dbReference>
<dbReference type="InterPro" id="IPR005824">
    <property type="entry name" value="KOW"/>
</dbReference>
<dbReference type="InterPro" id="IPR014722">
    <property type="entry name" value="Rib_uL2_dom2"/>
</dbReference>
<dbReference type="InterPro" id="IPR003256">
    <property type="entry name" value="Ribosomal_uL24"/>
</dbReference>
<dbReference type="InterPro" id="IPR005825">
    <property type="entry name" value="Ribosomal_uL24_CS"/>
</dbReference>
<dbReference type="InterPro" id="IPR041988">
    <property type="entry name" value="Ribosomal_uL24_KOW"/>
</dbReference>
<dbReference type="InterPro" id="IPR008991">
    <property type="entry name" value="Translation_prot_SH3-like_sf"/>
</dbReference>
<dbReference type="NCBIfam" id="TIGR01079">
    <property type="entry name" value="rplX_bact"/>
    <property type="match status" value="1"/>
</dbReference>
<dbReference type="PANTHER" id="PTHR12903">
    <property type="entry name" value="MITOCHONDRIAL RIBOSOMAL PROTEIN L24"/>
    <property type="match status" value="1"/>
</dbReference>
<dbReference type="Pfam" id="PF00467">
    <property type="entry name" value="KOW"/>
    <property type="match status" value="1"/>
</dbReference>
<dbReference type="Pfam" id="PF17136">
    <property type="entry name" value="ribosomal_L24"/>
    <property type="match status" value="1"/>
</dbReference>
<dbReference type="SMART" id="SM00739">
    <property type="entry name" value="KOW"/>
    <property type="match status" value="1"/>
</dbReference>
<dbReference type="SUPFAM" id="SSF50104">
    <property type="entry name" value="Translation proteins SH3-like domain"/>
    <property type="match status" value="1"/>
</dbReference>
<dbReference type="PROSITE" id="PS01108">
    <property type="entry name" value="RIBOSOMAL_L24"/>
    <property type="match status" value="1"/>
</dbReference>
<reference key="1">
    <citation type="journal article" date="2007" name="PLoS Genet.">
        <title>Meningococcal genetic variation mechanisms viewed through comparative analysis of serogroup C strain FAM18.</title>
        <authorList>
            <person name="Bentley S.D."/>
            <person name="Vernikos G.S."/>
            <person name="Snyder L.A.S."/>
            <person name="Churcher C."/>
            <person name="Arrowsmith C."/>
            <person name="Chillingworth T."/>
            <person name="Cronin A."/>
            <person name="Davis P.H."/>
            <person name="Holroyd N.E."/>
            <person name="Jagels K."/>
            <person name="Maddison M."/>
            <person name="Moule S."/>
            <person name="Rabbinowitsch E."/>
            <person name="Sharp S."/>
            <person name="Unwin L."/>
            <person name="Whitehead S."/>
            <person name="Quail M.A."/>
            <person name="Achtman M."/>
            <person name="Barrell B.G."/>
            <person name="Saunders N.J."/>
            <person name="Parkhill J."/>
        </authorList>
    </citation>
    <scope>NUCLEOTIDE SEQUENCE [LARGE SCALE GENOMIC DNA]</scope>
    <source>
        <strain>ATCC 700532 / DSM 15464 / FAM18</strain>
    </source>
</reference>
<comment type="function">
    <text evidence="1">One of two assembly initiator proteins, it binds directly to the 5'-end of the 23S rRNA, where it nucleates assembly of the 50S subunit.</text>
</comment>
<comment type="function">
    <text evidence="1">One of the proteins that surrounds the polypeptide exit tunnel on the outside of the subunit.</text>
</comment>
<comment type="subunit">
    <text evidence="1">Part of the 50S ribosomal subunit.</text>
</comment>
<comment type="similarity">
    <text evidence="1">Belongs to the universal ribosomal protein uL24 family.</text>
</comment>
<name>RL24_NEIMF</name>
<organism>
    <name type="scientific">Neisseria meningitidis serogroup C / serotype 2a (strain ATCC 700532 / DSM 15464 / FAM18)</name>
    <dbReference type="NCBI Taxonomy" id="272831"/>
    <lineage>
        <taxon>Bacteria</taxon>
        <taxon>Pseudomonadati</taxon>
        <taxon>Pseudomonadota</taxon>
        <taxon>Betaproteobacteria</taxon>
        <taxon>Neisseriales</taxon>
        <taxon>Neisseriaceae</taxon>
        <taxon>Neisseria</taxon>
    </lineage>
</organism>
<sequence length="107" mass="11667">MNKIIKGDRVVVIAGKDKGKQGQVVRVLGDKVVVEGVNVVKRHQKPNPMRGIEGGIITKEMPLDISNIAILNPETNKADRVGIKLIENEGKVKRVRFFKSNGSIIGA</sequence>
<proteinExistence type="inferred from homology"/>
<keyword id="KW-0687">Ribonucleoprotein</keyword>
<keyword id="KW-0689">Ribosomal protein</keyword>
<keyword id="KW-0694">RNA-binding</keyword>
<keyword id="KW-0699">rRNA-binding</keyword>
<evidence type="ECO:0000255" key="1">
    <source>
        <dbReference type="HAMAP-Rule" id="MF_01326"/>
    </source>
</evidence>
<evidence type="ECO:0000305" key="2"/>
<accession>A1KRI4</accession>
<protein>
    <recommendedName>
        <fullName evidence="1">Large ribosomal subunit protein uL24</fullName>
    </recommendedName>
    <alternativeName>
        <fullName evidence="2">50S ribosomal protein L24</fullName>
    </alternativeName>
</protein>
<feature type="chain" id="PRO_1000052266" description="Large ribosomal subunit protein uL24">
    <location>
        <begin position="1"/>
        <end position="107"/>
    </location>
</feature>